<protein>
    <recommendedName>
        <fullName>Dynein light chain roadblock-type 1</fullName>
    </recommendedName>
    <alternativeName>
        <fullName>Bithoraxoid-like protein</fullName>
        <shortName>BLP</shortName>
        <shortName>robl/LC7-like protein</shortName>
    </alternativeName>
    <alternativeName>
        <fullName>Dynein light chain 2A, cytoplasmic</fullName>
    </alternativeName>
    <alternativeName>
        <fullName>Dynein-associated protein Km23</fullName>
    </alternativeName>
</protein>
<keyword id="KW-0007">Acetylation</keyword>
<keyword id="KW-0963">Cytoplasm</keyword>
<keyword id="KW-0206">Cytoskeleton</keyword>
<keyword id="KW-0903">Direct protein sequencing</keyword>
<keyword id="KW-0243">Dynein</keyword>
<keyword id="KW-0493">Microtubule</keyword>
<keyword id="KW-0505">Motor protein</keyword>
<keyword id="KW-1185">Reference proteome</keyword>
<keyword id="KW-0813">Transport</keyword>
<organism>
    <name type="scientific">Rattus norvegicus</name>
    <name type="common">Rat</name>
    <dbReference type="NCBI Taxonomy" id="10116"/>
    <lineage>
        <taxon>Eukaryota</taxon>
        <taxon>Metazoa</taxon>
        <taxon>Chordata</taxon>
        <taxon>Craniata</taxon>
        <taxon>Vertebrata</taxon>
        <taxon>Euteleostomi</taxon>
        <taxon>Mammalia</taxon>
        <taxon>Eutheria</taxon>
        <taxon>Euarchontoglires</taxon>
        <taxon>Glires</taxon>
        <taxon>Rodentia</taxon>
        <taxon>Myomorpha</taxon>
        <taxon>Muroidea</taxon>
        <taxon>Muridae</taxon>
        <taxon>Murinae</taxon>
        <taxon>Rattus</taxon>
    </lineage>
</organism>
<proteinExistence type="evidence at protein level"/>
<feature type="initiator methionine" description="Removed" evidence="2">
    <location>
        <position position="1"/>
    </location>
</feature>
<feature type="chain" id="PRO_0000220957" description="Dynein light chain roadblock-type 1">
    <location>
        <begin position="2"/>
        <end position="96"/>
    </location>
</feature>
<feature type="modified residue" description="N-acetylalanine" evidence="2">
    <location>
        <position position="2"/>
    </location>
</feature>
<name>DLRB1_RAT</name>
<gene>
    <name type="primary">Dynlrb1</name>
    <name type="synonym">Dncl2a</name>
    <name type="synonym">Dnlc2a</name>
</gene>
<dbReference type="EMBL" id="AF073839">
    <property type="protein sequence ID" value="AAC25580.2"/>
    <property type="molecule type" value="mRNA"/>
</dbReference>
<dbReference type="EMBL" id="AY026512">
    <property type="protein sequence ID" value="AAK18711.1"/>
    <property type="molecule type" value="mRNA"/>
</dbReference>
<dbReference type="EMBL" id="BC058437">
    <property type="protein sequence ID" value="AAH58437.1"/>
    <property type="molecule type" value="mRNA"/>
</dbReference>
<dbReference type="RefSeq" id="NP_571985.1">
    <property type="nucleotide sequence ID" value="NM_131910.5"/>
</dbReference>
<dbReference type="BMRB" id="P62628"/>
<dbReference type="SMR" id="P62628"/>
<dbReference type="BioGRID" id="250982">
    <property type="interactions" value="2"/>
</dbReference>
<dbReference type="CORUM" id="P62628"/>
<dbReference type="FunCoup" id="P62628">
    <property type="interactions" value="1351"/>
</dbReference>
<dbReference type="IntAct" id="P62628">
    <property type="interactions" value="1"/>
</dbReference>
<dbReference type="MINT" id="P62628"/>
<dbReference type="STRING" id="10116.ENSRNOP00000060800"/>
<dbReference type="iPTMnet" id="P62628"/>
<dbReference type="PhosphoSitePlus" id="P62628"/>
<dbReference type="jPOST" id="P62628"/>
<dbReference type="PaxDb" id="10116-ENSRNOP00000060800"/>
<dbReference type="GeneID" id="170714"/>
<dbReference type="KEGG" id="rno:170714"/>
<dbReference type="UCSC" id="RGD:619910">
    <property type="organism name" value="rat"/>
</dbReference>
<dbReference type="AGR" id="RGD:619910"/>
<dbReference type="CTD" id="83658"/>
<dbReference type="RGD" id="619910">
    <property type="gene designation" value="Dynlrb1"/>
</dbReference>
<dbReference type="VEuPathDB" id="HostDB:ENSRNOG00000025715"/>
<dbReference type="eggNOG" id="KOG4115">
    <property type="taxonomic scope" value="Eukaryota"/>
</dbReference>
<dbReference type="HOGENOM" id="CLU_113002_3_2_1"/>
<dbReference type="InParanoid" id="P62628"/>
<dbReference type="PhylomeDB" id="P62628"/>
<dbReference type="Reactome" id="R-RNO-5620924">
    <property type="pathway name" value="Intraflagellar transport"/>
</dbReference>
<dbReference type="PRO" id="PR:P62628"/>
<dbReference type="Proteomes" id="UP000002494">
    <property type="component" value="Chromosome 3"/>
</dbReference>
<dbReference type="Bgee" id="ENSRNOG00000025715">
    <property type="expression patterns" value="Expressed in cerebellum and 20 other cell types or tissues"/>
</dbReference>
<dbReference type="GO" id="GO:1904115">
    <property type="term" value="C:axon cytoplasm"/>
    <property type="evidence" value="ECO:0007669"/>
    <property type="project" value="GOC"/>
</dbReference>
<dbReference type="GO" id="GO:0005813">
    <property type="term" value="C:centrosome"/>
    <property type="evidence" value="ECO:0000266"/>
    <property type="project" value="RGD"/>
</dbReference>
<dbReference type="GO" id="GO:0005737">
    <property type="term" value="C:cytoplasm"/>
    <property type="evidence" value="ECO:0000314"/>
    <property type="project" value="UniProtKB"/>
</dbReference>
<dbReference type="GO" id="GO:0005868">
    <property type="term" value="C:cytoplasmic dynein complex"/>
    <property type="evidence" value="ECO:0000250"/>
    <property type="project" value="UniProtKB"/>
</dbReference>
<dbReference type="GO" id="GO:0030286">
    <property type="term" value="C:dynein complex"/>
    <property type="evidence" value="ECO:0000266"/>
    <property type="project" value="RGD"/>
</dbReference>
<dbReference type="GO" id="GO:0005874">
    <property type="term" value="C:microtubule"/>
    <property type="evidence" value="ECO:0007669"/>
    <property type="project" value="UniProtKB-KW"/>
</dbReference>
<dbReference type="GO" id="GO:0045505">
    <property type="term" value="F:dynein intermediate chain binding"/>
    <property type="evidence" value="ECO:0000318"/>
    <property type="project" value="GO_Central"/>
</dbReference>
<dbReference type="GO" id="GO:0042802">
    <property type="term" value="F:identical protein binding"/>
    <property type="evidence" value="ECO:0000266"/>
    <property type="project" value="RGD"/>
</dbReference>
<dbReference type="GO" id="GO:0007018">
    <property type="term" value="P:microtubule-based movement"/>
    <property type="evidence" value="ECO:0000318"/>
    <property type="project" value="GO_Central"/>
</dbReference>
<dbReference type="GO" id="GO:0009416">
    <property type="term" value="P:response to light stimulus"/>
    <property type="evidence" value="ECO:0000270"/>
    <property type="project" value="RGD"/>
</dbReference>
<dbReference type="GO" id="GO:0008090">
    <property type="term" value="P:retrograde axonal transport"/>
    <property type="evidence" value="ECO:0000303"/>
    <property type="project" value="UniProtKB"/>
</dbReference>
<dbReference type="GO" id="GO:0007632">
    <property type="term" value="P:visual behavior"/>
    <property type="evidence" value="ECO:0000314"/>
    <property type="project" value="UniProtKB"/>
</dbReference>
<dbReference type="FunFam" id="3.30.450.30:FF:000002">
    <property type="entry name" value="Dynein light chain roadblock"/>
    <property type="match status" value="1"/>
</dbReference>
<dbReference type="Gene3D" id="3.30.450.30">
    <property type="entry name" value="Dynein light chain 2a, cytoplasmic"/>
    <property type="match status" value="1"/>
</dbReference>
<dbReference type="InterPro" id="IPR016561">
    <property type="entry name" value="DYNLRB1/2"/>
</dbReference>
<dbReference type="InterPro" id="IPR004942">
    <property type="entry name" value="Roadblock/LAMTOR2_dom"/>
</dbReference>
<dbReference type="PANTHER" id="PTHR10779">
    <property type="entry name" value="DYNEIN LIGHT CHAIN ROADBLOCK"/>
    <property type="match status" value="1"/>
</dbReference>
<dbReference type="Pfam" id="PF03259">
    <property type="entry name" value="Robl_LC7"/>
    <property type="match status" value="1"/>
</dbReference>
<dbReference type="PIRSF" id="PIRSF009998">
    <property type="entry name" value="DLC7"/>
    <property type="match status" value="1"/>
</dbReference>
<dbReference type="SMART" id="SM00960">
    <property type="entry name" value="Robl_LC7"/>
    <property type="match status" value="1"/>
</dbReference>
<dbReference type="SUPFAM" id="SSF103196">
    <property type="entry name" value="Roadblock/LC7 domain"/>
    <property type="match status" value="1"/>
</dbReference>
<reference key="1">
    <citation type="journal article" date="2000" name="J. Biol. Chem.">
        <title>Light-induced down-regulation of the rat class 1 dynein-associated protein robl/LC7-like gene in visual cortex.</title>
        <authorList>
            <person name="Ye F.C."/>
            <person name="Zangenenhpour S."/>
            <person name="Chaudhuri A."/>
        </authorList>
    </citation>
    <scope>NUCLEOTIDE SEQUENCE [MRNA]</scope>
    <source>
        <tissue>Visual cortex</tissue>
    </source>
</reference>
<reference key="2">
    <citation type="submission" date="2001-01" db="EMBL/GenBank/DDBJ databases">
        <title>Km23: role in growth factor signaling.</title>
        <authorList>
            <person name="Tang Q."/>
            <person name="Staub C.M."/>
            <person name="Mulder K.M."/>
        </authorList>
    </citation>
    <scope>NUCLEOTIDE SEQUENCE [MRNA]</scope>
    <source>
        <tissue>Intestine</tissue>
    </source>
</reference>
<reference key="3">
    <citation type="journal article" date="2004" name="Genome Res.">
        <title>The status, quality, and expansion of the NIH full-length cDNA project: the Mammalian Gene Collection (MGC).</title>
        <authorList>
            <consortium name="The MGC Project Team"/>
        </authorList>
    </citation>
    <scope>NUCLEOTIDE SEQUENCE [LARGE SCALE MRNA]</scope>
    <source>
        <tissue>Pituitary</tissue>
    </source>
</reference>
<reference key="4">
    <citation type="submission" date="2007-04" db="UniProtKB">
        <authorList>
            <person name="Lubec G."/>
            <person name="Diao W."/>
        </authorList>
    </citation>
    <scope>PROTEIN SEQUENCE OF 59-70</scope>
    <scope>IDENTIFICATION BY MASS SPECTROMETRY</scope>
    <source>
        <strain>Sprague-Dawley</strain>
        <tissue>Hippocampus</tissue>
    </source>
</reference>
<reference key="5">
    <citation type="submission" date="2007-02" db="UniProtKB">
        <authorList>
            <person name="Lubec G."/>
            <person name="Chen W.-Q."/>
        </authorList>
    </citation>
    <scope>ACETYLATION AT ALA-2</scope>
    <scope>IDENTIFICATION BY MASS SPECTROMETRY</scope>
</reference>
<comment type="function">
    <text evidence="1">Acts as one of several non-catalytic accessory components of the cytoplasmic dynein 1 complex that are thought to be involved in linking dynein to cargos and to adapter proteins that regulate dynein function. Cytoplasmic dynein 1 acts as a motor for the intracellular retrograde motility of vesicles and organelles along microtubules.</text>
</comment>
<comment type="subunit">
    <text evidence="1">Homodimer. The cytoplasmic dynein 1 complex consists of two catalytic heavy chains (HCs) and a number of non-catalytic subunits presented by intermediate chains (ICs), light intermediate chains (LICs) and light chains (LCs); the composition seems to vary in respect to the IC, LIC and LC composition. The heavy chain homodimer serves as a scaffold for the probable homodimeric assembly of the respective non-catalytic subunits. The ICs and LICs bind directly to the HC dimer and the LCs assemble on the IC dimer. Interacts with DYNLRB2. Interacts with DYNC1I1 and DYNC1I2. Interacts with RAB6A isoform 1 (GTP-bound); the interaction is direct. Interacts with RAB6A isoform 2 (GDP-bound); the interaction is direct. Interacts with RAB6B (GDP-bound).</text>
</comment>
<comment type="subcellular location">
    <subcellularLocation>
        <location evidence="1">Cytoplasm</location>
        <location evidence="1">Cytoskeleton</location>
    </subcellularLocation>
</comment>
<comment type="similarity">
    <text evidence="3">Belongs to the GAMAD family.</text>
</comment>
<evidence type="ECO:0000250" key="1">
    <source>
        <dbReference type="UniProtKB" id="Q9NP97"/>
    </source>
</evidence>
<evidence type="ECO:0000269" key="2">
    <source ref="5"/>
</evidence>
<evidence type="ECO:0000305" key="3"/>
<sequence length="96" mass="10990">MAEVEETLKRLQSQKGVQGIIVVNTEGIPIKSTMDNPTTTQYANLMHNFILKARSTVREIDPQNDLTFLRIRSKKNEIMVAPDKDYFLIVIQNPTE</sequence>
<accession>P62628</accession>
<accession>O88567</accession>
<accession>Q9D812</accession>